<dbReference type="EC" id="4.2.1.59" evidence="1"/>
<dbReference type="EMBL" id="CP000009">
    <property type="protein sequence ID" value="AAW61560.1"/>
    <property type="molecule type" value="Genomic_DNA"/>
</dbReference>
<dbReference type="RefSeq" id="WP_011253341.1">
    <property type="nucleotide sequence ID" value="NZ_LT900338.1"/>
</dbReference>
<dbReference type="SMR" id="Q5FPY6"/>
<dbReference type="STRING" id="290633.GOX1821"/>
<dbReference type="GeneID" id="56906156"/>
<dbReference type="KEGG" id="gox:GOX1821"/>
<dbReference type="eggNOG" id="COG0764">
    <property type="taxonomic scope" value="Bacteria"/>
</dbReference>
<dbReference type="HOGENOM" id="CLU_078912_1_2_5"/>
<dbReference type="Proteomes" id="UP000006375">
    <property type="component" value="Chromosome"/>
</dbReference>
<dbReference type="GO" id="GO:0005737">
    <property type="term" value="C:cytoplasm"/>
    <property type="evidence" value="ECO:0007669"/>
    <property type="project" value="UniProtKB-SubCell"/>
</dbReference>
<dbReference type="GO" id="GO:0016020">
    <property type="term" value="C:membrane"/>
    <property type="evidence" value="ECO:0007669"/>
    <property type="project" value="GOC"/>
</dbReference>
<dbReference type="GO" id="GO:0019171">
    <property type="term" value="F:(3R)-hydroxyacyl-[acyl-carrier-protein] dehydratase activity"/>
    <property type="evidence" value="ECO:0007669"/>
    <property type="project" value="UniProtKB-EC"/>
</dbReference>
<dbReference type="GO" id="GO:0006633">
    <property type="term" value="P:fatty acid biosynthetic process"/>
    <property type="evidence" value="ECO:0007669"/>
    <property type="project" value="UniProtKB-UniRule"/>
</dbReference>
<dbReference type="GO" id="GO:0009245">
    <property type="term" value="P:lipid A biosynthetic process"/>
    <property type="evidence" value="ECO:0007669"/>
    <property type="project" value="UniProtKB-UniRule"/>
</dbReference>
<dbReference type="CDD" id="cd01288">
    <property type="entry name" value="FabZ"/>
    <property type="match status" value="1"/>
</dbReference>
<dbReference type="FunFam" id="3.10.129.10:FF:000001">
    <property type="entry name" value="3-hydroxyacyl-[acyl-carrier-protein] dehydratase FabZ"/>
    <property type="match status" value="1"/>
</dbReference>
<dbReference type="Gene3D" id="3.10.129.10">
    <property type="entry name" value="Hotdog Thioesterase"/>
    <property type="match status" value="1"/>
</dbReference>
<dbReference type="HAMAP" id="MF_00406">
    <property type="entry name" value="FabZ"/>
    <property type="match status" value="1"/>
</dbReference>
<dbReference type="InterPro" id="IPR013114">
    <property type="entry name" value="FabA_FabZ"/>
</dbReference>
<dbReference type="InterPro" id="IPR010084">
    <property type="entry name" value="FabZ"/>
</dbReference>
<dbReference type="InterPro" id="IPR029069">
    <property type="entry name" value="HotDog_dom_sf"/>
</dbReference>
<dbReference type="NCBIfam" id="TIGR01750">
    <property type="entry name" value="fabZ"/>
    <property type="match status" value="1"/>
</dbReference>
<dbReference type="NCBIfam" id="NF000582">
    <property type="entry name" value="PRK00006.1"/>
    <property type="match status" value="1"/>
</dbReference>
<dbReference type="PANTHER" id="PTHR30272">
    <property type="entry name" value="3-HYDROXYACYL-[ACYL-CARRIER-PROTEIN] DEHYDRATASE"/>
    <property type="match status" value="1"/>
</dbReference>
<dbReference type="PANTHER" id="PTHR30272:SF1">
    <property type="entry name" value="3-HYDROXYACYL-[ACYL-CARRIER-PROTEIN] DEHYDRATASE"/>
    <property type="match status" value="1"/>
</dbReference>
<dbReference type="Pfam" id="PF07977">
    <property type="entry name" value="FabA"/>
    <property type="match status" value="1"/>
</dbReference>
<dbReference type="SUPFAM" id="SSF54637">
    <property type="entry name" value="Thioesterase/thiol ester dehydrase-isomerase"/>
    <property type="match status" value="1"/>
</dbReference>
<organism>
    <name type="scientific">Gluconobacter oxydans (strain 621H)</name>
    <name type="common">Gluconobacter suboxydans</name>
    <dbReference type="NCBI Taxonomy" id="290633"/>
    <lineage>
        <taxon>Bacteria</taxon>
        <taxon>Pseudomonadati</taxon>
        <taxon>Pseudomonadota</taxon>
        <taxon>Alphaproteobacteria</taxon>
        <taxon>Acetobacterales</taxon>
        <taxon>Acetobacteraceae</taxon>
        <taxon>Gluconobacter</taxon>
    </lineage>
</organism>
<keyword id="KW-0963">Cytoplasm</keyword>
<keyword id="KW-0441">Lipid A biosynthesis</keyword>
<keyword id="KW-0444">Lipid biosynthesis</keyword>
<keyword id="KW-0443">Lipid metabolism</keyword>
<keyword id="KW-0456">Lyase</keyword>
<keyword id="KW-1185">Reference proteome</keyword>
<reference key="1">
    <citation type="journal article" date="2005" name="Nat. Biotechnol.">
        <title>Complete genome sequence of the acetic acid bacterium Gluconobacter oxydans.</title>
        <authorList>
            <person name="Prust C."/>
            <person name="Hoffmeister M."/>
            <person name="Liesegang H."/>
            <person name="Wiezer A."/>
            <person name="Fricke W.F."/>
            <person name="Ehrenreich A."/>
            <person name="Gottschalk G."/>
            <person name="Deppenmeier U."/>
        </authorList>
    </citation>
    <scope>NUCLEOTIDE SEQUENCE [LARGE SCALE GENOMIC DNA]</scope>
    <source>
        <strain>621H</strain>
    </source>
</reference>
<protein>
    <recommendedName>
        <fullName evidence="1">3-hydroxyacyl-[acyl-carrier-protein] dehydratase FabZ</fullName>
        <ecNumber evidence="1">4.2.1.59</ecNumber>
    </recommendedName>
    <alternativeName>
        <fullName evidence="1">(3R)-hydroxymyristoyl-[acyl-carrier-protein] dehydratase</fullName>
        <shortName evidence="1">(3R)-hydroxymyristoyl-ACP dehydrase</shortName>
    </alternativeName>
    <alternativeName>
        <fullName evidence="1">Beta-hydroxyacyl-ACP dehydratase</fullName>
    </alternativeName>
</protein>
<comment type="function">
    <text evidence="1">Involved in unsaturated fatty acids biosynthesis. Catalyzes the dehydration of short chain beta-hydroxyacyl-ACPs and long chain saturated and unsaturated beta-hydroxyacyl-ACPs.</text>
</comment>
<comment type="catalytic activity">
    <reaction evidence="1">
        <text>a (3R)-hydroxyacyl-[ACP] = a (2E)-enoyl-[ACP] + H2O</text>
        <dbReference type="Rhea" id="RHEA:13097"/>
        <dbReference type="Rhea" id="RHEA-COMP:9925"/>
        <dbReference type="Rhea" id="RHEA-COMP:9945"/>
        <dbReference type="ChEBI" id="CHEBI:15377"/>
        <dbReference type="ChEBI" id="CHEBI:78784"/>
        <dbReference type="ChEBI" id="CHEBI:78827"/>
        <dbReference type="EC" id="4.2.1.59"/>
    </reaction>
</comment>
<comment type="subcellular location">
    <subcellularLocation>
        <location evidence="1">Cytoplasm</location>
    </subcellularLocation>
</comment>
<comment type="similarity">
    <text evidence="1">Belongs to the thioester dehydratase family. FabZ subfamily.</text>
</comment>
<accession>Q5FPY6</accession>
<evidence type="ECO:0000255" key="1">
    <source>
        <dbReference type="HAMAP-Rule" id="MF_00406"/>
    </source>
</evidence>
<name>FABZ_GLUOX</name>
<sequence>MDRVDAPAEQMTPATDAAADSHQVPQSIDILKIMQSIPHRYPFLLIDKMVEIHAGQSAIGIKNVTVNEPFFQGHFPSHPVMPGVLIVEAMAQTAATLVVMTLGKAFEGKLVYFMTIENAKFRRPVGPGDQLRIHVDKERSRANVWKFKGVARVDDVAVAEATFSAMIMG</sequence>
<feature type="chain" id="PRO_0000091684" description="3-hydroxyacyl-[acyl-carrier-protein] dehydratase FabZ">
    <location>
        <begin position="1"/>
        <end position="169"/>
    </location>
</feature>
<feature type="active site" evidence="1">
    <location>
        <position position="74"/>
    </location>
</feature>
<gene>
    <name evidence="1" type="primary">fabZ</name>
    <name type="ordered locus">GOX1821</name>
</gene>
<proteinExistence type="inferred from homology"/>